<accession>Q4QMY5</accession>
<proteinExistence type="inferred from homology"/>
<name>ASNA_HAEI8</name>
<keyword id="KW-0028">Amino-acid biosynthesis</keyword>
<keyword id="KW-0061">Asparagine biosynthesis</keyword>
<keyword id="KW-0067">ATP-binding</keyword>
<keyword id="KW-0963">Cytoplasm</keyword>
<keyword id="KW-0436">Ligase</keyword>
<keyword id="KW-0547">Nucleotide-binding</keyword>
<dbReference type="EC" id="6.3.1.1" evidence="1"/>
<dbReference type="EMBL" id="CP000057">
    <property type="protein sequence ID" value="AAX87612.1"/>
    <property type="molecule type" value="Genomic_DNA"/>
</dbReference>
<dbReference type="RefSeq" id="WP_011272108.1">
    <property type="nucleotide sequence ID" value="NC_007146.2"/>
</dbReference>
<dbReference type="SMR" id="Q4QMY5"/>
<dbReference type="KEGG" id="hit:NTHI0692"/>
<dbReference type="HOGENOM" id="CLU_071543_0_0_6"/>
<dbReference type="UniPathway" id="UPA00134">
    <property type="reaction ID" value="UER00194"/>
</dbReference>
<dbReference type="Proteomes" id="UP000002525">
    <property type="component" value="Chromosome"/>
</dbReference>
<dbReference type="GO" id="GO:0005829">
    <property type="term" value="C:cytosol"/>
    <property type="evidence" value="ECO:0007669"/>
    <property type="project" value="TreeGrafter"/>
</dbReference>
<dbReference type="GO" id="GO:0004071">
    <property type="term" value="F:aspartate-ammonia ligase activity"/>
    <property type="evidence" value="ECO:0007669"/>
    <property type="project" value="UniProtKB-UniRule"/>
</dbReference>
<dbReference type="GO" id="GO:0005524">
    <property type="term" value="F:ATP binding"/>
    <property type="evidence" value="ECO:0007669"/>
    <property type="project" value="UniProtKB-UniRule"/>
</dbReference>
<dbReference type="GO" id="GO:0070981">
    <property type="term" value="P:L-asparagine biosynthetic process"/>
    <property type="evidence" value="ECO:0007669"/>
    <property type="project" value="UniProtKB-UniRule"/>
</dbReference>
<dbReference type="Gene3D" id="3.30.930.10">
    <property type="entry name" value="Bira Bifunctional Protein, Domain 2"/>
    <property type="match status" value="1"/>
</dbReference>
<dbReference type="HAMAP" id="MF_00555">
    <property type="entry name" value="AsnA"/>
    <property type="match status" value="1"/>
</dbReference>
<dbReference type="InterPro" id="IPR006195">
    <property type="entry name" value="aa-tRNA-synth_II"/>
</dbReference>
<dbReference type="InterPro" id="IPR045864">
    <property type="entry name" value="aa-tRNA-synth_II/BPL/LPL"/>
</dbReference>
<dbReference type="InterPro" id="IPR004618">
    <property type="entry name" value="AsnA"/>
</dbReference>
<dbReference type="NCBIfam" id="TIGR00669">
    <property type="entry name" value="asnA"/>
    <property type="match status" value="1"/>
</dbReference>
<dbReference type="PANTHER" id="PTHR30073">
    <property type="entry name" value="ASPARTATE--AMMONIA LIGASE"/>
    <property type="match status" value="1"/>
</dbReference>
<dbReference type="PANTHER" id="PTHR30073:SF5">
    <property type="entry name" value="ASPARTATE--AMMONIA LIGASE"/>
    <property type="match status" value="1"/>
</dbReference>
<dbReference type="Pfam" id="PF03590">
    <property type="entry name" value="AsnA"/>
    <property type="match status" value="1"/>
</dbReference>
<dbReference type="PIRSF" id="PIRSF001555">
    <property type="entry name" value="Asp_ammon_ligase"/>
    <property type="match status" value="1"/>
</dbReference>
<dbReference type="SUPFAM" id="SSF55681">
    <property type="entry name" value="Class II aaRS and biotin synthetases"/>
    <property type="match status" value="1"/>
</dbReference>
<dbReference type="PROSITE" id="PS50862">
    <property type="entry name" value="AA_TRNA_LIGASE_II"/>
    <property type="match status" value="1"/>
</dbReference>
<evidence type="ECO:0000255" key="1">
    <source>
        <dbReference type="HAMAP-Rule" id="MF_00555"/>
    </source>
</evidence>
<reference key="1">
    <citation type="journal article" date="2005" name="J. Bacteriol.">
        <title>Genomic sequence of an otitis media isolate of nontypeable Haemophilus influenzae: comparative study with H. influenzae serotype d, strain KW20.</title>
        <authorList>
            <person name="Harrison A."/>
            <person name="Dyer D.W."/>
            <person name="Gillaspy A."/>
            <person name="Ray W.C."/>
            <person name="Mungur R."/>
            <person name="Carson M.B."/>
            <person name="Zhong H."/>
            <person name="Gipson J."/>
            <person name="Gipson M."/>
            <person name="Johnson L.S."/>
            <person name="Lewis L."/>
            <person name="Bakaletz L.O."/>
            <person name="Munson R.S. Jr."/>
        </authorList>
    </citation>
    <scope>NUCLEOTIDE SEQUENCE [LARGE SCALE GENOMIC DNA]</scope>
    <source>
        <strain>86-028NP</strain>
    </source>
</reference>
<gene>
    <name evidence="1" type="primary">asnA</name>
    <name type="ordered locus">NTHI0692</name>
</gene>
<comment type="catalytic activity">
    <reaction evidence="1">
        <text>L-aspartate + NH4(+) + ATP = L-asparagine + AMP + diphosphate + H(+)</text>
        <dbReference type="Rhea" id="RHEA:11372"/>
        <dbReference type="ChEBI" id="CHEBI:15378"/>
        <dbReference type="ChEBI" id="CHEBI:28938"/>
        <dbReference type="ChEBI" id="CHEBI:29991"/>
        <dbReference type="ChEBI" id="CHEBI:30616"/>
        <dbReference type="ChEBI" id="CHEBI:33019"/>
        <dbReference type="ChEBI" id="CHEBI:58048"/>
        <dbReference type="ChEBI" id="CHEBI:456215"/>
        <dbReference type="EC" id="6.3.1.1"/>
    </reaction>
</comment>
<comment type="pathway">
    <text evidence="1">Amino-acid biosynthesis; L-asparagine biosynthesis; L-asparagine from L-aspartate (ammonia route): step 1/1.</text>
</comment>
<comment type="subcellular location">
    <subcellularLocation>
        <location evidence="1">Cytoplasm</location>
    </subcellularLocation>
</comment>
<comment type="similarity">
    <text evidence="1">Belongs to the class-II aminoacyl-tRNA synthetase family. AsnA subfamily.</text>
</comment>
<feature type="chain" id="PRO_1000017946" description="Aspartate--ammonia ligase">
    <location>
        <begin position="1"/>
        <end position="330"/>
    </location>
</feature>
<protein>
    <recommendedName>
        <fullName evidence="1">Aspartate--ammonia ligase</fullName>
        <ecNumber evidence="1">6.3.1.1</ecNumber>
    </recommendedName>
    <alternativeName>
        <fullName evidence="1">Asparagine synthetase A</fullName>
    </alternativeName>
</protein>
<sequence length="330" mass="37465">MKKTFILQQQEISFVKNTFTQNLIEQLGIIEVQGPILSQVGNGMQDNLSGIEKAVQVNVKCIPNAIFEVVHSLAKWKRHTLARFNFKEDEGLFVHMKALRPDEDSLDPTHSVYVDQWDWEKVIPEGRRNFAYLKETVNSIYRAIRLTELAVEARFDIPSILPKQITFVHSEDLVKRYPDLSSKERENAICKEYGAVFLIGIGGKLSDGKPHDGRAPDYDDWTTESENGYKGLNGDILVWNDQLGKAFELSSMGIRVDESALRLQVGLTGDEDRLKMDWHQDLLNGKLPLTIGGGIGQSRLAMLLLRKKHIGEVQSSVWPKEMLEEFSNIL</sequence>
<organism>
    <name type="scientific">Haemophilus influenzae (strain 86-028NP)</name>
    <dbReference type="NCBI Taxonomy" id="281310"/>
    <lineage>
        <taxon>Bacteria</taxon>
        <taxon>Pseudomonadati</taxon>
        <taxon>Pseudomonadota</taxon>
        <taxon>Gammaproteobacteria</taxon>
        <taxon>Pasteurellales</taxon>
        <taxon>Pasteurellaceae</taxon>
        <taxon>Haemophilus</taxon>
    </lineage>
</organism>